<proteinExistence type="inferred from homology"/>
<comment type="function">
    <text evidence="1">Specifically methylates the N7 position of guanine in position 527 of 16S rRNA.</text>
</comment>
<comment type="catalytic activity">
    <reaction evidence="1">
        <text>guanosine(527) in 16S rRNA + S-adenosyl-L-methionine = N(7)-methylguanosine(527) in 16S rRNA + S-adenosyl-L-homocysteine</text>
        <dbReference type="Rhea" id="RHEA:42732"/>
        <dbReference type="Rhea" id="RHEA-COMP:10209"/>
        <dbReference type="Rhea" id="RHEA-COMP:10210"/>
        <dbReference type="ChEBI" id="CHEBI:57856"/>
        <dbReference type="ChEBI" id="CHEBI:59789"/>
        <dbReference type="ChEBI" id="CHEBI:74269"/>
        <dbReference type="ChEBI" id="CHEBI:74480"/>
        <dbReference type="EC" id="2.1.1.170"/>
    </reaction>
</comment>
<comment type="subcellular location">
    <subcellularLocation>
        <location evidence="1">Cytoplasm</location>
    </subcellularLocation>
</comment>
<comment type="similarity">
    <text evidence="1">Belongs to the methyltransferase superfamily. RNA methyltransferase RsmG family.</text>
</comment>
<organism>
    <name type="scientific">Helicobacter bizzozeronii</name>
    <dbReference type="NCBI Taxonomy" id="56877"/>
    <lineage>
        <taxon>Bacteria</taxon>
        <taxon>Pseudomonadati</taxon>
        <taxon>Campylobacterota</taxon>
        <taxon>Epsilonproteobacteria</taxon>
        <taxon>Campylobacterales</taxon>
        <taxon>Helicobacteraceae</taxon>
        <taxon>Helicobacter</taxon>
    </lineage>
</organism>
<dbReference type="EC" id="2.1.1.170" evidence="1"/>
<dbReference type="EMBL" id="AF330621">
    <property type="protein sequence ID" value="AAO15371.1"/>
    <property type="molecule type" value="Genomic_DNA"/>
</dbReference>
<dbReference type="RefSeq" id="WP_104685269.1">
    <property type="nucleotide sequence ID" value="NZ_FZKO01000054.1"/>
</dbReference>
<dbReference type="SMR" id="Q8GHA0"/>
<dbReference type="GO" id="GO:0005829">
    <property type="term" value="C:cytosol"/>
    <property type="evidence" value="ECO:0007669"/>
    <property type="project" value="TreeGrafter"/>
</dbReference>
<dbReference type="GO" id="GO:0070043">
    <property type="term" value="F:rRNA (guanine-N7-)-methyltransferase activity"/>
    <property type="evidence" value="ECO:0007669"/>
    <property type="project" value="UniProtKB-UniRule"/>
</dbReference>
<dbReference type="Gene3D" id="3.40.50.150">
    <property type="entry name" value="Vaccinia Virus protein VP39"/>
    <property type="match status" value="1"/>
</dbReference>
<dbReference type="HAMAP" id="MF_00074">
    <property type="entry name" value="16SrRNA_methyltr_G"/>
    <property type="match status" value="1"/>
</dbReference>
<dbReference type="InterPro" id="IPR003682">
    <property type="entry name" value="rRNA_ssu_MeTfrase_G"/>
</dbReference>
<dbReference type="InterPro" id="IPR029063">
    <property type="entry name" value="SAM-dependent_MTases_sf"/>
</dbReference>
<dbReference type="NCBIfam" id="TIGR00138">
    <property type="entry name" value="rsmG_gidB"/>
    <property type="match status" value="1"/>
</dbReference>
<dbReference type="PANTHER" id="PTHR31760">
    <property type="entry name" value="S-ADENOSYL-L-METHIONINE-DEPENDENT METHYLTRANSFERASES SUPERFAMILY PROTEIN"/>
    <property type="match status" value="1"/>
</dbReference>
<dbReference type="PANTHER" id="PTHR31760:SF0">
    <property type="entry name" value="S-ADENOSYL-L-METHIONINE-DEPENDENT METHYLTRANSFERASES SUPERFAMILY PROTEIN"/>
    <property type="match status" value="1"/>
</dbReference>
<dbReference type="Pfam" id="PF02527">
    <property type="entry name" value="GidB"/>
    <property type="match status" value="1"/>
</dbReference>
<dbReference type="PIRSF" id="PIRSF003078">
    <property type="entry name" value="GidB"/>
    <property type="match status" value="1"/>
</dbReference>
<dbReference type="SUPFAM" id="SSF53335">
    <property type="entry name" value="S-adenosyl-L-methionine-dependent methyltransferases"/>
    <property type="match status" value="1"/>
</dbReference>
<name>RSMG_HELBI</name>
<feature type="chain" id="PRO_0000184261" description="Ribosomal RNA small subunit methyltransferase G">
    <location>
        <begin position="1"/>
        <end position="179"/>
    </location>
</feature>
<feature type="binding site" evidence="1">
    <location>
        <position position="54"/>
    </location>
    <ligand>
        <name>S-adenosyl-L-methionine</name>
        <dbReference type="ChEBI" id="CHEBI:59789"/>
    </ligand>
</feature>
<feature type="binding site" evidence="1">
    <location>
        <position position="59"/>
    </location>
    <ligand>
        <name>S-adenosyl-L-methionine</name>
        <dbReference type="ChEBI" id="CHEBI:59789"/>
    </ligand>
</feature>
<feature type="binding site" evidence="1">
    <location>
        <begin position="105"/>
        <end position="106"/>
    </location>
    <ligand>
        <name>S-adenosyl-L-methionine</name>
        <dbReference type="ChEBI" id="CHEBI:59789"/>
    </ligand>
</feature>
<feature type="binding site" evidence="1">
    <location>
        <position position="121"/>
    </location>
    <ligand>
        <name>S-adenosyl-L-methionine</name>
        <dbReference type="ChEBI" id="CHEBI:59789"/>
    </ligand>
</feature>
<reference key="1">
    <citation type="journal article" date="2002" name="DNA Seq.">
        <title>Cloning and characterization of a Helicobacter bizzozeronii urease gene cluster.</title>
        <authorList>
            <person name="Zhu J."/>
            <person name="Teng C.H."/>
            <person name="Chang C.F."/>
            <person name="Chang C.D."/>
            <person name="Simpson K.W."/>
            <person name="Wei C."/>
            <person name="McDonough P."/>
            <person name="McDonough S."/>
            <person name="Chang Y.F."/>
        </authorList>
    </citation>
    <scope>NUCLEOTIDE SEQUENCE [GENOMIC DNA]</scope>
</reference>
<gene>
    <name evidence="1" type="primary">rsmG</name>
    <name type="synonym">gidB</name>
</gene>
<protein>
    <recommendedName>
        <fullName evidence="1">Ribosomal RNA small subunit methyltransferase G</fullName>
        <ecNumber evidence="1">2.1.1.170</ecNumber>
    </recommendedName>
    <alternativeName>
        <fullName evidence="1">16S rRNA 7-methylguanosine methyltransferase</fullName>
        <shortName evidence="1">16S rRNA m7G methyltransferase</shortName>
    </alternativeName>
    <alternativeName>
        <fullName>Glucose-inhibited division protein B</fullName>
    </alternativeName>
</protein>
<sequence>MRAKLDLFTHLLLEWGSVHNLSGAKNHQDIEHNIQDSLQVLDFIAPFKSCLDIGSGAGFPAIPLSLACSNARFILLEPNAKKVAFLHHVKLALNLNNLEIQRMRIEHVSPQSVLVDLITSRALMNAQNLIALSAPFLREQGHFLFYKGSHLRTEIACADHECHVYGKRVYFYSQRRDFA</sequence>
<accession>Q8GHA0</accession>
<evidence type="ECO:0000255" key="1">
    <source>
        <dbReference type="HAMAP-Rule" id="MF_00074"/>
    </source>
</evidence>
<keyword id="KW-0963">Cytoplasm</keyword>
<keyword id="KW-0489">Methyltransferase</keyword>
<keyword id="KW-0698">rRNA processing</keyword>
<keyword id="KW-0949">S-adenosyl-L-methionine</keyword>
<keyword id="KW-0808">Transferase</keyword>